<evidence type="ECO:0000250" key="1">
    <source>
        <dbReference type="UniProtKB" id="P07978"/>
    </source>
</evidence>
<evidence type="ECO:0000250" key="2">
    <source>
        <dbReference type="UniProtKB" id="P11248"/>
    </source>
</evidence>
<evidence type="ECO:0000256" key="3">
    <source>
        <dbReference type="SAM" id="MobiDB-lite"/>
    </source>
</evidence>
<evidence type="ECO:0000305" key="4"/>
<comment type="function">
    <text evidence="1">Protamines substitute for histones in the chromatin of sperm during the haploid phase of spermatogenesis. They compact sperm DNA into a highly condensed, stable and inactive complex.</text>
</comment>
<comment type="subunit">
    <text evidence="1">Interacts with TDRP.</text>
</comment>
<comment type="subcellular location">
    <subcellularLocation>
        <location evidence="1">Nucleus</location>
    </subcellularLocation>
    <subcellularLocation>
        <location evidence="1">Chromosome</location>
    </subcellularLocation>
</comment>
<comment type="tissue specificity">
    <text>Testis.</text>
</comment>
<comment type="PTM">
    <text evidence="1">Proteolytic processing into mature chains is required for histone eviction during spermatogenesis. Transition proteins (TNP1 and TNP2) are required for processing.</text>
</comment>
<comment type="similarity">
    <text evidence="4">Belongs to the protamine P2 family.</text>
</comment>
<proteinExistence type="evidence at transcript level"/>
<organism>
    <name type="scientific">Gorilla gorilla gorilla</name>
    <name type="common">Western lowland gorilla</name>
    <dbReference type="NCBI Taxonomy" id="9595"/>
    <lineage>
        <taxon>Eukaryota</taxon>
        <taxon>Metazoa</taxon>
        <taxon>Chordata</taxon>
        <taxon>Craniata</taxon>
        <taxon>Vertebrata</taxon>
        <taxon>Euteleostomi</taxon>
        <taxon>Mammalia</taxon>
        <taxon>Eutheria</taxon>
        <taxon>Euarchontoglires</taxon>
        <taxon>Primates</taxon>
        <taxon>Haplorrhini</taxon>
        <taxon>Catarrhini</taxon>
        <taxon>Hominidae</taxon>
        <taxon>Gorilla</taxon>
    </lineage>
</organism>
<feature type="chain" id="PRO_0000191599" description="Protamine-2">
    <location>
        <begin position="1"/>
        <end position="102"/>
    </location>
</feature>
<feature type="region of interest" description="Disordered" evidence="3">
    <location>
        <begin position="1"/>
        <end position="102"/>
    </location>
</feature>
<feature type="compositionally biased region" description="Basic and acidic residues" evidence="3">
    <location>
        <begin position="8"/>
        <end position="17"/>
    </location>
</feature>
<feature type="compositionally biased region" description="Basic and acidic residues" evidence="3">
    <location>
        <begin position="39"/>
        <end position="48"/>
    </location>
</feature>
<feature type="compositionally biased region" description="Basic residues" evidence="3">
    <location>
        <begin position="49"/>
        <end position="102"/>
    </location>
</feature>
<feature type="modified residue" description="Phosphoserine" evidence="2">
    <location>
        <position position="8"/>
    </location>
</feature>
<feature type="modified residue" description="Phosphoserine" evidence="2">
    <location>
        <position position="10"/>
    </location>
</feature>
<feature type="modified residue" description="Phosphoserine" evidence="2">
    <location>
        <position position="37"/>
    </location>
</feature>
<feature type="sequence conflict" description="In Ref. 3; AAF34631." evidence="4" ref="3">
    <original>R</original>
    <variation>Q</variation>
    <location>
        <position position="60"/>
    </location>
</feature>
<dbReference type="EMBL" id="X71336">
    <property type="protein sequence ID" value="CAA50476.1"/>
    <property type="molecule type" value="Genomic_DNA"/>
</dbReference>
<dbReference type="EMBL" id="AF215712">
    <property type="protein sequence ID" value="AAF34631.1"/>
    <property type="molecule type" value="Genomic_DNA"/>
</dbReference>
<dbReference type="PIR" id="S33333">
    <property type="entry name" value="S33333"/>
</dbReference>
<dbReference type="FunCoup" id="P35313">
    <property type="interactions" value="9"/>
</dbReference>
<dbReference type="STRING" id="9593.ENSGGOP00000000673"/>
<dbReference type="eggNOG" id="ENOG502TD5P">
    <property type="taxonomic scope" value="Eukaryota"/>
</dbReference>
<dbReference type="InParanoid" id="P35313"/>
<dbReference type="Proteomes" id="UP000001519">
    <property type="component" value="Unplaced"/>
</dbReference>
<dbReference type="GO" id="GO:0000786">
    <property type="term" value="C:nucleosome"/>
    <property type="evidence" value="ECO:0007669"/>
    <property type="project" value="UniProtKB-KW"/>
</dbReference>
<dbReference type="GO" id="GO:0005634">
    <property type="term" value="C:nucleus"/>
    <property type="evidence" value="ECO:0000318"/>
    <property type="project" value="GO_Central"/>
</dbReference>
<dbReference type="GO" id="GO:0003677">
    <property type="term" value="F:DNA binding"/>
    <property type="evidence" value="ECO:0007669"/>
    <property type="project" value="UniProtKB-KW"/>
</dbReference>
<dbReference type="GO" id="GO:0030261">
    <property type="term" value="P:chromosome condensation"/>
    <property type="evidence" value="ECO:0007669"/>
    <property type="project" value="UniProtKB-KW"/>
</dbReference>
<dbReference type="GO" id="GO:0006997">
    <property type="term" value="P:nucleus organization"/>
    <property type="evidence" value="ECO:0000318"/>
    <property type="project" value="GO_Central"/>
</dbReference>
<dbReference type="GO" id="GO:0007286">
    <property type="term" value="P:spermatid development"/>
    <property type="evidence" value="ECO:0000318"/>
    <property type="project" value="GO_Central"/>
</dbReference>
<dbReference type="GO" id="GO:0007283">
    <property type="term" value="P:spermatogenesis"/>
    <property type="evidence" value="ECO:0000250"/>
    <property type="project" value="UniProtKB"/>
</dbReference>
<dbReference type="InterPro" id="IPR000492">
    <property type="entry name" value="PRM2"/>
</dbReference>
<dbReference type="PANTHER" id="PTHR21341">
    <property type="entry name" value="PROTAMINE-2"/>
    <property type="match status" value="1"/>
</dbReference>
<dbReference type="PANTHER" id="PTHR21341:SF2">
    <property type="entry name" value="PROTAMINE-2"/>
    <property type="match status" value="1"/>
</dbReference>
<dbReference type="Pfam" id="PF00841">
    <property type="entry name" value="Protamine_P2"/>
    <property type="match status" value="1"/>
</dbReference>
<accession>P35313</accession>
<accession>Q9N1A9</accession>
<sequence length="102" mass="12975">MVRCRVRSPSERSHEVYRQQLHGQEQGHHGQEEQGLSPEHVEVYERTHGHSHYRRRHCSRRRLRRIHRQQHRSCRRRKRRSCRHRRRHRKGCRTRRRTCRRH</sequence>
<name>PRM2_GORGO</name>
<protein>
    <recommendedName>
        <fullName>Protamine-2</fullName>
    </recommendedName>
    <alternativeName>
        <fullName>Sperm histone P2</fullName>
    </alternativeName>
    <alternativeName>
        <fullName>Sperm protamine P2</fullName>
    </alternativeName>
</protein>
<keyword id="KW-0158">Chromosome</keyword>
<keyword id="KW-0217">Developmental protein</keyword>
<keyword id="KW-0221">Differentiation</keyword>
<keyword id="KW-0226">DNA condensation</keyword>
<keyword id="KW-0238">DNA-binding</keyword>
<keyword id="KW-0544">Nucleosome core</keyword>
<keyword id="KW-0539">Nucleus</keyword>
<keyword id="KW-0597">Phosphoprotein</keyword>
<keyword id="KW-1185">Reference proteome</keyword>
<keyword id="KW-0744">Spermatogenesis</keyword>
<reference key="1">
    <citation type="journal article" date="1993" name="Eur. J. Biochem.">
        <title>Evolution of pro-protamine P2 genes in primates.</title>
        <authorList>
            <person name="Retief J.D."/>
            <person name="Dixon G.H."/>
        </authorList>
    </citation>
    <scope>NUCLEOTIDE SEQUENCE [GENOMIC DNA]</scope>
</reference>
<reference key="2">
    <citation type="journal article" date="1993" name="Eur. J. Biochem.">
        <authorList>
            <person name="Retief J.D."/>
            <person name="Dixon G.H."/>
        </authorList>
    </citation>
    <scope>ERRATUM OF PUBMED:8513810</scope>
</reference>
<reference key="3">
    <citation type="journal article" date="2000" name="Nature">
        <title>Rapid evolution of male reproductive genes in the descent of man.</title>
        <authorList>
            <person name="Wyckoff G.J."/>
            <person name="Wang W."/>
            <person name="Wu C.-I."/>
        </authorList>
    </citation>
    <scope>NUCLEOTIDE SEQUENCE [GENOMIC DNA]</scope>
</reference>
<gene>
    <name type="primary">PRM2</name>
</gene>